<name>LOLD_SHESM</name>
<dbReference type="EC" id="7.6.2.-" evidence="1"/>
<dbReference type="EMBL" id="CP000446">
    <property type="protein sequence ID" value="ABI38807.1"/>
    <property type="status" value="ALT_INIT"/>
    <property type="molecule type" value="Genomic_DNA"/>
</dbReference>
<dbReference type="RefSeq" id="WP_041408759.1">
    <property type="nucleotide sequence ID" value="NC_008321.1"/>
</dbReference>
<dbReference type="SMR" id="Q0HJG0"/>
<dbReference type="KEGG" id="she:Shewmr4_1733"/>
<dbReference type="HOGENOM" id="CLU_000604_1_22_6"/>
<dbReference type="GO" id="GO:0005886">
    <property type="term" value="C:plasma membrane"/>
    <property type="evidence" value="ECO:0007669"/>
    <property type="project" value="UniProtKB-SubCell"/>
</dbReference>
<dbReference type="GO" id="GO:0005524">
    <property type="term" value="F:ATP binding"/>
    <property type="evidence" value="ECO:0007669"/>
    <property type="project" value="UniProtKB-KW"/>
</dbReference>
<dbReference type="GO" id="GO:0016887">
    <property type="term" value="F:ATP hydrolysis activity"/>
    <property type="evidence" value="ECO:0007669"/>
    <property type="project" value="InterPro"/>
</dbReference>
<dbReference type="GO" id="GO:0022857">
    <property type="term" value="F:transmembrane transporter activity"/>
    <property type="evidence" value="ECO:0007669"/>
    <property type="project" value="TreeGrafter"/>
</dbReference>
<dbReference type="GO" id="GO:0044874">
    <property type="term" value="P:lipoprotein localization to outer membrane"/>
    <property type="evidence" value="ECO:0007669"/>
    <property type="project" value="TreeGrafter"/>
</dbReference>
<dbReference type="GO" id="GO:0089705">
    <property type="term" value="P:protein localization to outer membrane"/>
    <property type="evidence" value="ECO:0007669"/>
    <property type="project" value="TreeGrafter"/>
</dbReference>
<dbReference type="CDD" id="cd03255">
    <property type="entry name" value="ABC_MJ0796_LolCDE_FtsE"/>
    <property type="match status" value="1"/>
</dbReference>
<dbReference type="FunFam" id="3.40.50.300:FF:000230">
    <property type="entry name" value="Lipoprotein-releasing system ATP-binding protein LolD"/>
    <property type="match status" value="1"/>
</dbReference>
<dbReference type="Gene3D" id="3.40.50.300">
    <property type="entry name" value="P-loop containing nucleotide triphosphate hydrolases"/>
    <property type="match status" value="1"/>
</dbReference>
<dbReference type="InterPro" id="IPR003593">
    <property type="entry name" value="AAA+_ATPase"/>
</dbReference>
<dbReference type="InterPro" id="IPR003439">
    <property type="entry name" value="ABC_transporter-like_ATP-bd"/>
</dbReference>
<dbReference type="InterPro" id="IPR017871">
    <property type="entry name" value="ABC_transporter-like_CS"/>
</dbReference>
<dbReference type="InterPro" id="IPR015854">
    <property type="entry name" value="ABC_transpr_LolD-like"/>
</dbReference>
<dbReference type="InterPro" id="IPR011924">
    <property type="entry name" value="LolD_lipo_ATP-bd"/>
</dbReference>
<dbReference type="InterPro" id="IPR017911">
    <property type="entry name" value="MacB-like_ATP-bd"/>
</dbReference>
<dbReference type="InterPro" id="IPR027417">
    <property type="entry name" value="P-loop_NTPase"/>
</dbReference>
<dbReference type="NCBIfam" id="TIGR02211">
    <property type="entry name" value="LolD_lipo_ex"/>
    <property type="match status" value="1"/>
</dbReference>
<dbReference type="PANTHER" id="PTHR24220">
    <property type="entry name" value="IMPORT ATP-BINDING PROTEIN"/>
    <property type="match status" value="1"/>
</dbReference>
<dbReference type="PANTHER" id="PTHR24220:SF689">
    <property type="entry name" value="LIPOPROTEIN-RELEASING SYSTEM ATP-BINDING PROTEIN LOLD"/>
    <property type="match status" value="1"/>
</dbReference>
<dbReference type="Pfam" id="PF00005">
    <property type="entry name" value="ABC_tran"/>
    <property type="match status" value="1"/>
</dbReference>
<dbReference type="SMART" id="SM00382">
    <property type="entry name" value="AAA"/>
    <property type="match status" value="1"/>
</dbReference>
<dbReference type="SUPFAM" id="SSF52540">
    <property type="entry name" value="P-loop containing nucleoside triphosphate hydrolases"/>
    <property type="match status" value="1"/>
</dbReference>
<dbReference type="PROSITE" id="PS00211">
    <property type="entry name" value="ABC_TRANSPORTER_1"/>
    <property type="match status" value="1"/>
</dbReference>
<dbReference type="PROSITE" id="PS50893">
    <property type="entry name" value="ABC_TRANSPORTER_2"/>
    <property type="match status" value="1"/>
</dbReference>
<dbReference type="PROSITE" id="PS51244">
    <property type="entry name" value="LOLD"/>
    <property type="match status" value="1"/>
</dbReference>
<keyword id="KW-0067">ATP-binding</keyword>
<keyword id="KW-0997">Cell inner membrane</keyword>
<keyword id="KW-1003">Cell membrane</keyword>
<keyword id="KW-0472">Membrane</keyword>
<keyword id="KW-0547">Nucleotide-binding</keyword>
<keyword id="KW-1278">Translocase</keyword>
<keyword id="KW-0813">Transport</keyword>
<protein>
    <recommendedName>
        <fullName evidence="1">Lipoprotein-releasing system ATP-binding protein LolD</fullName>
        <ecNumber evidence="1">7.6.2.-</ecNumber>
    </recommendedName>
</protein>
<proteinExistence type="inferred from homology"/>
<gene>
    <name evidence="1" type="primary">lolD</name>
    <name type="ordered locus">Shewmr4_1733</name>
</gene>
<feature type="chain" id="PRO_0000272151" description="Lipoprotein-releasing system ATP-binding protein LolD">
    <location>
        <begin position="1"/>
        <end position="231"/>
    </location>
</feature>
<feature type="domain" description="ABC transporter" evidence="1">
    <location>
        <begin position="6"/>
        <end position="231"/>
    </location>
</feature>
<feature type="binding site" evidence="1">
    <location>
        <begin position="42"/>
        <end position="49"/>
    </location>
    <ligand>
        <name>ATP</name>
        <dbReference type="ChEBI" id="CHEBI:30616"/>
    </ligand>
</feature>
<organism>
    <name type="scientific">Shewanella sp. (strain MR-4)</name>
    <dbReference type="NCBI Taxonomy" id="60480"/>
    <lineage>
        <taxon>Bacteria</taxon>
        <taxon>Pseudomonadati</taxon>
        <taxon>Pseudomonadota</taxon>
        <taxon>Gammaproteobacteria</taxon>
        <taxon>Alteromonadales</taxon>
        <taxon>Shewanellaceae</taxon>
        <taxon>Shewanella</taxon>
    </lineage>
</organism>
<reference key="1">
    <citation type="submission" date="2006-08" db="EMBL/GenBank/DDBJ databases">
        <title>Complete sequence of Shewanella sp. MR-4.</title>
        <authorList>
            <consortium name="US DOE Joint Genome Institute"/>
            <person name="Copeland A."/>
            <person name="Lucas S."/>
            <person name="Lapidus A."/>
            <person name="Barry K."/>
            <person name="Detter J.C."/>
            <person name="Glavina del Rio T."/>
            <person name="Hammon N."/>
            <person name="Israni S."/>
            <person name="Dalin E."/>
            <person name="Tice H."/>
            <person name="Pitluck S."/>
            <person name="Kiss H."/>
            <person name="Brettin T."/>
            <person name="Bruce D."/>
            <person name="Han C."/>
            <person name="Tapia R."/>
            <person name="Gilna P."/>
            <person name="Schmutz J."/>
            <person name="Larimer F."/>
            <person name="Land M."/>
            <person name="Hauser L."/>
            <person name="Kyrpides N."/>
            <person name="Mikhailova N."/>
            <person name="Nealson K."/>
            <person name="Konstantinidis K."/>
            <person name="Klappenbach J."/>
            <person name="Tiedje J."/>
            <person name="Richardson P."/>
        </authorList>
    </citation>
    <scope>NUCLEOTIDE SEQUENCE [LARGE SCALE GENOMIC DNA]</scope>
    <source>
        <strain>MR-4</strain>
    </source>
</reference>
<sequence length="231" mass="25121">MQDVLLQVQAVSKSYHDGDVTTQVLTEVDLQVFKGEQLAIVGTSGSGKSTLLHIMGTLDKPSAGKVLLAGEDLYQVSSARQAQIRNQDLGFIYQFHHLLPEFSALENVAMPAFIQGTDRAQAQADAKMLLERVGLGHRMSHIPAELSGGERQRVAIARALINKPKLVLADEPTGNLDAKSGEAVYELIRELANQLGTAFVVVTHDPKLAARMDRQLTMKNGYLQAVAEHAQ</sequence>
<comment type="function">
    <text evidence="1">Part of the ABC transporter complex LolCDE involved in the translocation of mature outer membrane-directed lipoproteins, from the inner membrane to the periplasmic chaperone, LolA. Responsible for the formation of the LolA-lipoprotein complex in an ATP-dependent manner.</text>
</comment>
<comment type="subunit">
    <text evidence="1">The complex is composed of two ATP-binding proteins (LolD) and two transmembrane proteins (LolC and LolE).</text>
</comment>
<comment type="subcellular location">
    <subcellularLocation>
        <location evidence="1">Cell inner membrane</location>
        <topology evidence="1">Peripheral membrane protein</topology>
    </subcellularLocation>
</comment>
<comment type="similarity">
    <text evidence="1">Belongs to the ABC transporter superfamily. Lipoprotein translocase (TC 3.A.1.125) family.</text>
</comment>
<comment type="sequence caution" evidence="2">
    <conflict type="erroneous initiation">
        <sequence resource="EMBL-CDS" id="ABI38807"/>
    </conflict>
</comment>
<accession>Q0HJG0</accession>
<evidence type="ECO:0000255" key="1">
    <source>
        <dbReference type="HAMAP-Rule" id="MF_01708"/>
    </source>
</evidence>
<evidence type="ECO:0000305" key="2"/>